<reference key="1">
    <citation type="journal article" date="2014" name="Phytochemistry">
        <title>Identification of UGT84A13 as a candidate enzyme for the first committed step of gallotannin biosynthesis in pedunculate oak (Quercus robur).</title>
        <authorList>
            <person name="Mittasch J."/>
            <person name="Boettcher C."/>
            <person name="Frolova N."/>
            <person name="Boenn M."/>
            <person name="Milkowski C."/>
        </authorList>
    </citation>
    <scope>NUCLEOTIDE SEQUENCE [MRNA]</scope>
    <scope>FUNCTION</scope>
    <scope>CATALYTIC ACTIVITY</scope>
    <scope>BIOPHYSICOCHEMICAL PROPERTIES</scope>
    <scope>SUBSTRATE SPECIFICITY</scope>
    <source>
        <tissue>Flower bud</tissue>
        <tissue>Leaf</tissue>
    </source>
</reference>
<organism evidence="6">
    <name type="scientific">Quercus robur</name>
    <name type="common">English oak</name>
    <dbReference type="NCBI Taxonomy" id="38942"/>
    <lineage>
        <taxon>Eukaryota</taxon>
        <taxon>Viridiplantae</taxon>
        <taxon>Streptophyta</taxon>
        <taxon>Embryophyta</taxon>
        <taxon>Tracheophyta</taxon>
        <taxon>Spermatophyta</taxon>
        <taxon>Magnoliopsida</taxon>
        <taxon>eudicotyledons</taxon>
        <taxon>Gunneridae</taxon>
        <taxon>Pentapetalae</taxon>
        <taxon>rosids</taxon>
        <taxon>fabids</taxon>
        <taxon>Fagales</taxon>
        <taxon>Fagaceae</taxon>
        <taxon>Quercus</taxon>
    </lineage>
</organism>
<comment type="function">
    <text evidence="3">Glucosyltransferase that catalyzes the formation of 1-O-beta-D-glucose esters with hydroxybenzoic acids as preferred glucosyl acceptors. Has the highest activity with 3,4-dihydroxybenzoate, vanillate and gallate in vitro. Gallate is the predicted native substrate of the enzyme, which thus catalyzes the formation of 1-O-galloyl-beta-D-glucose, the first committed step of gallotannin biosynthesis.</text>
</comment>
<comment type="catalytic activity">
    <reaction evidence="3">
        <text>3,4,5-trihydroxybenzoate + UDP-alpha-D-glucose = 1-O-galloyl-beta-D-glucose + UDP</text>
        <dbReference type="Rhea" id="RHEA:15249"/>
        <dbReference type="ChEBI" id="CHEBI:15834"/>
        <dbReference type="ChEBI" id="CHEBI:16918"/>
        <dbReference type="ChEBI" id="CHEBI:58223"/>
        <dbReference type="ChEBI" id="CHEBI:58885"/>
        <dbReference type="EC" id="2.4.1.136"/>
    </reaction>
</comment>
<comment type="catalytic activity">
    <reaction evidence="3">
        <text>vanillate + UDP-alpha-D-glucose = 1-O-(4-hydroxy-3-methoxybenzoyl)-beta-D-glucose + UDP</text>
        <dbReference type="Rhea" id="RHEA:52840"/>
        <dbReference type="ChEBI" id="CHEBI:16632"/>
        <dbReference type="ChEBI" id="CHEBI:58223"/>
        <dbReference type="ChEBI" id="CHEBI:58885"/>
        <dbReference type="ChEBI" id="CHEBI:71512"/>
        <dbReference type="EC" id="2.4.1.136"/>
    </reaction>
</comment>
<comment type="catalytic activity">
    <reaction evidence="3">
        <text>3,4-dihydroxybenzoate + UDP-alpha-D-glucose = 1-O-(3,4-dihydroxy-benzoyl)-beta-D-glucose + UDP</text>
        <dbReference type="Rhea" id="RHEA:52844"/>
        <dbReference type="ChEBI" id="CHEBI:36241"/>
        <dbReference type="ChEBI" id="CHEBI:58223"/>
        <dbReference type="ChEBI" id="CHEBI:58885"/>
        <dbReference type="ChEBI" id="CHEBI:136876"/>
        <dbReference type="EC" id="2.4.1.136"/>
    </reaction>
</comment>
<comment type="biophysicochemical properties">
    <kinetics>
        <KM evidence="3">420 uM for gallate</KM>
        <KM evidence="3">290 uM for 3,4-dihydroxybenzoate</KM>
        <KM evidence="3">230 uM for vanillate</KM>
        <Vmax evidence="3">204.0 nmol/sec/mg enzyme with gallate as substrate</Vmax>
        <Vmax evidence="3">283.0 nmol/sec/mg enzyme with 3,4-dihydroxybenzoate as substrate</Vmax>
        <Vmax evidence="3">203.0 nmol/sec/mg enzyme with vanillate as substrate</Vmax>
    </kinetics>
</comment>
<comment type="tissue specificity">
    <text evidence="3">Expressed in swelling buds and young leaves.</text>
</comment>
<comment type="similarity">
    <text evidence="5">Belongs to the UDP-glycosyltransferase family.</text>
</comment>
<feature type="chain" id="PRO_0000440587" description="Gallate 1-beta-glucosyltransferase">
    <location>
        <begin position="1"/>
        <end position="510"/>
    </location>
</feature>
<feature type="active site" description="Proton acceptor" evidence="1">
    <location>
        <position position="19"/>
    </location>
</feature>
<feature type="binding site" evidence="2">
    <location>
        <position position="19"/>
    </location>
    <ligand>
        <name>an anthocyanidin</name>
        <dbReference type="ChEBI" id="CHEBI:143576"/>
    </ligand>
</feature>
<feature type="binding site" evidence="1">
    <location>
        <position position="343"/>
    </location>
    <ligand>
        <name>UDP-alpha-D-glucose</name>
        <dbReference type="ChEBI" id="CHEBI:58885"/>
    </ligand>
</feature>
<feature type="binding site" evidence="1">
    <location>
        <position position="358"/>
    </location>
    <ligand>
        <name>UDP-alpha-D-glucose</name>
        <dbReference type="ChEBI" id="CHEBI:58885"/>
    </ligand>
</feature>
<feature type="binding site" evidence="1">
    <location>
        <position position="361"/>
    </location>
    <ligand>
        <name>UDP-alpha-D-glucose</name>
        <dbReference type="ChEBI" id="CHEBI:58885"/>
    </ligand>
</feature>
<feature type="binding site" evidence="1">
    <location>
        <position position="362"/>
    </location>
    <ligand>
        <name>UDP-alpha-D-glucose</name>
        <dbReference type="ChEBI" id="CHEBI:58885"/>
    </ligand>
</feature>
<feature type="binding site" evidence="1">
    <location>
        <position position="363"/>
    </location>
    <ligand>
        <name>UDP-alpha-D-glucose</name>
        <dbReference type="ChEBI" id="CHEBI:58885"/>
    </ligand>
</feature>
<feature type="binding site" evidence="1">
    <location>
        <position position="366"/>
    </location>
    <ligand>
        <name>UDP-alpha-D-glucose</name>
        <dbReference type="ChEBI" id="CHEBI:58885"/>
    </ligand>
</feature>
<feature type="binding site" evidence="2">
    <location>
        <position position="381"/>
    </location>
    <ligand>
        <name>an anthocyanidin</name>
        <dbReference type="ChEBI" id="CHEBI:143576"/>
    </ligand>
</feature>
<feature type="binding site" evidence="1">
    <location>
        <position position="382"/>
    </location>
    <ligand>
        <name>UDP-alpha-D-glucose</name>
        <dbReference type="ChEBI" id="CHEBI:58885"/>
    </ligand>
</feature>
<feature type="binding site" evidence="1">
    <location>
        <position position="383"/>
    </location>
    <ligand>
        <name>UDP-alpha-D-glucose</name>
        <dbReference type="ChEBI" id="CHEBI:58885"/>
    </ligand>
</feature>
<gene>
    <name evidence="4" type="primary">UGT84A13</name>
</gene>
<proteinExistence type="evidence at protein level"/>
<protein>
    <recommendedName>
        <fullName evidence="4">Gallate 1-beta-glucosyltransferase</fullName>
        <ecNumber evidence="3">2.4.1.136</ecNumber>
    </recommendedName>
    <alternativeName>
        <fullName evidence="4">UDP-glucose:gallate glucosyltransferase</fullName>
    </alternativeName>
    <alternativeName>
        <fullName evidence="5">Vanillate 1-beta-glucosyltransferase</fullName>
    </alternativeName>
</protein>
<dbReference type="EC" id="2.4.1.136" evidence="3"/>
<dbReference type="EMBL" id="KF527849">
    <property type="protein sequence ID" value="AHA54051.1"/>
    <property type="molecule type" value="mRNA"/>
</dbReference>
<dbReference type="SMR" id="V5LLZ9"/>
<dbReference type="KEGG" id="ag:AHA54051"/>
<dbReference type="GO" id="GO:0047913">
    <property type="term" value="F:gallate 1-beta-glucosyltransferase activity"/>
    <property type="evidence" value="ECO:0007669"/>
    <property type="project" value="UniProtKB-EC"/>
</dbReference>
<dbReference type="GO" id="GO:0080043">
    <property type="term" value="F:quercetin 3-O-glucosyltransferase activity"/>
    <property type="evidence" value="ECO:0007669"/>
    <property type="project" value="TreeGrafter"/>
</dbReference>
<dbReference type="GO" id="GO:0080044">
    <property type="term" value="F:quercetin 7-O-glucosyltransferase activity"/>
    <property type="evidence" value="ECO:0007669"/>
    <property type="project" value="TreeGrafter"/>
</dbReference>
<dbReference type="CDD" id="cd03784">
    <property type="entry name" value="GT1_Gtf-like"/>
    <property type="match status" value="1"/>
</dbReference>
<dbReference type="FunFam" id="3.40.50.2000:FF:000019">
    <property type="entry name" value="Glycosyltransferase"/>
    <property type="match status" value="1"/>
</dbReference>
<dbReference type="FunFam" id="3.40.50.2000:FF:000101">
    <property type="entry name" value="Glycosyltransferase"/>
    <property type="match status" value="1"/>
</dbReference>
<dbReference type="Gene3D" id="3.40.50.2000">
    <property type="entry name" value="Glycogen Phosphorylase B"/>
    <property type="match status" value="2"/>
</dbReference>
<dbReference type="InterPro" id="IPR002213">
    <property type="entry name" value="UDP_glucos_trans"/>
</dbReference>
<dbReference type="InterPro" id="IPR035595">
    <property type="entry name" value="UDP_glycos_trans_CS"/>
</dbReference>
<dbReference type="PANTHER" id="PTHR11926">
    <property type="entry name" value="GLUCOSYL/GLUCURONOSYL TRANSFERASES"/>
    <property type="match status" value="1"/>
</dbReference>
<dbReference type="PANTHER" id="PTHR11926:SF986">
    <property type="entry name" value="UDP-GLYCOSYLTRANSFERASE 84A1"/>
    <property type="match status" value="1"/>
</dbReference>
<dbReference type="Pfam" id="PF00201">
    <property type="entry name" value="UDPGT"/>
    <property type="match status" value="1"/>
</dbReference>
<dbReference type="SUPFAM" id="SSF53756">
    <property type="entry name" value="UDP-Glycosyltransferase/glycogen phosphorylase"/>
    <property type="match status" value="1"/>
</dbReference>
<dbReference type="PROSITE" id="PS00375">
    <property type="entry name" value="UDPGT"/>
    <property type="match status" value="1"/>
</dbReference>
<name>GGT_QUERO</name>
<accession>V5LLZ9</accession>
<evidence type="ECO:0000250" key="1">
    <source>
        <dbReference type="UniProtKB" id="A0A0A1HA03"/>
    </source>
</evidence>
<evidence type="ECO:0000250" key="2">
    <source>
        <dbReference type="UniProtKB" id="P51094"/>
    </source>
</evidence>
<evidence type="ECO:0000269" key="3">
    <source>
    </source>
</evidence>
<evidence type="ECO:0000303" key="4">
    <source>
    </source>
</evidence>
<evidence type="ECO:0000305" key="5"/>
<evidence type="ECO:0000312" key="6">
    <source>
        <dbReference type="EMBL" id="AHA54051.1"/>
    </source>
</evidence>
<sequence length="510" mass="56555">MGSEALVHVFLVSFPGQGHVNPLLRLGKRLAAKGLLVTFSTPESIGKQMRKASNITDEPAPVGEGFIRFEFFEDGWDEDEPRRQDLDQYLPQLELIGKDIIPKMIRKNAEMGRPVSCLINNPFIPWVSDVAESLGLPSAMLWVQSCACFCAYYHYYHGLVPFPSEAEPFIDIQLPCMPLLKYDETPSFLYPTTPYPFLRRAILGQYGNLDKPFCILMDTFQELEHEVIEFMSKICPIKTVGPLFKNPKAPNSVRGDFMKADDCLEWLDSKPPQSVVYISFGSVVYLTQKQVDEIAFGLLQSGVSFLWVMKPPHKDAGLELLVLPDGFLEKAGDNGRVVQWSPQEQVLAHPSVACFVTHCGWNSTMESLTSGMPVVAFPQWGDQVTDAVYLVDVFKTGVRMCRGEAENRVITRDEVEKCLLEATVGPKAVEMKQNASKWKAAAEAAFSEGGSSDRNIQAFVDEVRARSVAITGKSTANGVALDLAEKSAEINGKVDLVETKTNGKVELVEA</sequence>
<keyword id="KW-0328">Glycosyltransferase</keyword>
<keyword id="KW-0808">Transferase</keyword>